<protein>
    <recommendedName>
        <fullName>Heme-binding protein 1</fullName>
    </recommendedName>
</protein>
<name>HEBP1_XENLA</name>
<evidence type="ECO:0000250" key="1"/>
<evidence type="ECO:0000305" key="2"/>
<organism>
    <name type="scientific">Xenopus laevis</name>
    <name type="common">African clawed frog</name>
    <dbReference type="NCBI Taxonomy" id="8355"/>
    <lineage>
        <taxon>Eukaryota</taxon>
        <taxon>Metazoa</taxon>
        <taxon>Chordata</taxon>
        <taxon>Craniata</taxon>
        <taxon>Vertebrata</taxon>
        <taxon>Euteleostomi</taxon>
        <taxon>Amphibia</taxon>
        <taxon>Batrachia</taxon>
        <taxon>Anura</taxon>
        <taxon>Pipoidea</taxon>
        <taxon>Pipidae</taxon>
        <taxon>Xenopodinae</taxon>
        <taxon>Xenopus</taxon>
        <taxon>Xenopus</taxon>
    </lineage>
</organism>
<comment type="function">
    <text evidence="1">May bind free porphyrinogens that may be present in the cell and thus facilitate removal of these potentially toxic compound. Binds with a high affinity to one molecule of heme or porphyrins. It binds metalloporphyrins, free porphyrins and N-methylprotoporphyrin with similar affinities (By similarity).</text>
</comment>
<comment type="subunit">
    <text evidence="1">Monomer.</text>
</comment>
<comment type="subcellular location">
    <subcellularLocation>
        <location evidence="1">Cytoplasm</location>
    </subcellularLocation>
</comment>
<comment type="domain">
    <text evidence="1">Forms a distorted beta-barrel structure, with two helices that are packed against the outer surface of the barrel. Porphyrins are expected to bind to a hydrophobic patch on the outer surface of the beta-barrel structure (By similarity).</text>
</comment>
<comment type="similarity">
    <text evidence="2">Belongs to the HEBP family.</text>
</comment>
<keyword id="KW-0963">Cytoplasm</keyword>
<keyword id="KW-1185">Reference proteome</keyword>
<dbReference type="EMBL" id="BC068797">
    <property type="protein sequence ID" value="AAH68797.1"/>
    <property type="molecule type" value="mRNA"/>
</dbReference>
<dbReference type="RefSeq" id="NP_001084668.1">
    <property type="nucleotide sequence ID" value="NM_001091199.1"/>
</dbReference>
<dbReference type="SMR" id="Q6NU05"/>
<dbReference type="GeneID" id="414628"/>
<dbReference type="KEGG" id="xla:414628"/>
<dbReference type="AGR" id="Xenbase:XB-GENE-1002296"/>
<dbReference type="CTD" id="414628"/>
<dbReference type="Xenbase" id="XB-GENE-1002296">
    <property type="gene designation" value="hebp1.L"/>
</dbReference>
<dbReference type="OrthoDB" id="9980274at2759"/>
<dbReference type="Proteomes" id="UP000186698">
    <property type="component" value="Chromosome 4L"/>
</dbReference>
<dbReference type="Bgee" id="414628">
    <property type="expression patterns" value="Expressed in liver and 20 other cell types or tissues"/>
</dbReference>
<dbReference type="GO" id="GO:0005737">
    <property type="term" value="C:cytoplasm"/>
    <property type="evidence" value="ECO:0007669"/>
    <property type="project" value="UniProtKB-SubCell"/>
</dbReference>
<dbReference type="GO" id="GO:0020037">
    <property type="term" value="F:heme binding"/>
    <property type="evidence" value="ECO:0000250"/>
    <property type="project" value="UniProtKB"/>
</dbReference>
<dbReference type="FunFam" id="3.20.80.10:FF:000003">
    <property type="entry name" value="Heme-binding protein 1"/>
    <property type="match status" value="1"/>
</dbReference>
<dbReference type="Gene3D" id="3.20.80.10">
    <property type="entry name" value="Regulatory factor, effector binding domain"/>
    <property type="match status" value="1"/>
</dbReference>
<dbReference type="InterPro" id="IPR011256">
    <property type="entry name" value="Reg_factor_effector_dom_sf"/>
</dbReference>
<dbReference type="InterPro" id="IPR006917">
    <property type="entry name" value="SOUL_haem-bd"/>
</dbReference>
<dbReference type="PANTHER" id="PTHR11220:SF22">
    <property type="entry name" value="HEME-BINDING PROTEIN 1"/>
    <property type="match status" value="1"/>
</dbReference>
<dbReference type="PANTHER" id="PTHR11220">
    <property type="entry name" value="HEME-BINDING PROTEIN-RELATED"/>
    <property type="match status" value="1"/>
</dbReference>
<dbReference type="Pfam" id="PF04832">
    <property type="entry name" value="SOUL"/>
    <property type="match status" value="1"/>
</dbReference>
<dbReference type="SUPFAM" id="SSF55136">
    <property type="entry name" value="Probable bacterial effector-binding domain"/>
    <property type="match status" value="1"/>
</dbReference>
<feature type="chain" id="PRO_0000286550" description="Heme-binding protein 1">
    <location>
        <begin position="1"/>
        <end position="190"/>
    </location>
</feature>
<accession>Q6NU05</accession>
<reference key="1">
    <citation type="submission" date="2004-04" db="EMBL/GenBank/DDBJ databases">
        <authorList>
            <consortium name="NIH - Xenopus Gene Collection (XGC) project"/>
        </authorList>
    </citation>
    <scope>NUCLEOTIDE SEQUENCE [LARGE SCALE MRNA]</scope>
    <source>
        <tissue>Embryo</tissue>
    </source>
</reference>
<proteinExistence type="evidence at transcript level"/>
<gene>
    <name type="primary">hebp1</name>
</gene>
<sequence length="190" mass="21073">MFGMIKNSLLGGVENNEGKLVSKGEKDGVAFEEREYEGGKFISTEVSGKPFDEASKEGVLRLLKYVGGSNNKSAGMGMTSPVIINSYPSENDTLQPNVKVLLRIPSQYQADPPVPTDNTIQIEDRESVTLYSTQFGGYAKEADYVSHAAKLRSCLGPDISYHSDYYMCCGYDPPMKPYGRRNEVWFIKNN</sequence>